<protein>
    <recommendedName>
        <fullName evidence="1">Crotonobetainyl-CoA reductase</fullName>
        <ecNumber evidence="1">1.3.8.13</ecNumber>
    </recommendedName>
    <alternativeName>
        <fullName evidence="1">Crotonobetainyl-CoA dehydrogenase</fullName>
    </alternativeName>
</protein>
<evidence type="ECO:0000255" key="1">
    <source>
        <dbReference type="HAMAP-Rule" id="MF_01052"/>
    </source>
</evidence>
<sequence length="380" mass="42558">MDFNLNDEQELFVAGIRELMASENWEAYFAECDRDSVYPERFVKALADMGIDSLLIPEEHGGLDAGFVTLAAVWMELGRLGAPTYVLYQLPGGFNTFLREGTQEQIDKIMAFRGTGKQMWNSAITEPGAGSDVGSLKTTYTRRNGKIYLNGSKCFITSSAYTPYIVVMARDGASPDKPVYTEWFVDMSKPGIKVTKLEKLGLRMDSCCEITFDDVELDEKDMFGREGNGFNRVKEEFDHERFLVALTNYGTAMCAFEDAARYANQRVQFGEAIGRFQLIQEKFAHMAIKLNSMKNMLYEAAWKADNGTITSGDAAMCKYFCANAAFEVVDSAMQVLGGVGIAGNHRISRFWRDLRVDRVSGGSDEMQILTLGRAVLKQYR</sequence>
<dbReference type="EC" id="1.3.8.13" evidence="1"/>
<dbReference type="EMBL" id="CP000038">
    <property type="protein sequence ID" value="AAZ86843.1"/>
    <property type="molecule type" value="Genomic_DNA"/>
</dbReference>
<dbReference type="RefSeq" id="WP_000347117.1">
    <property type="nucleotide sequence ID" value="NC_007384.1"/>
</dbReference>
<dbReference type="SMR" id="Q3Z5W9"/>
<dbReference type="GeneID" id="93777396"/>
<dbReference type="KEGG" id="ssn:SSON_0047"/>
<dbReference type="HOGENOM" id="CLU_018204_0_2_6"/>
<dbReference type="UniPathway" id="UPA00117"/>
<dbReference type="Proteomes" id="UP000002529">
    <property type="component" value="Chromosome"/>
</dbReference>
<dbReference type="GO" id="GO:0005737">
    <property type="term" value="C:cytoplasm"/>
    <property type="evidence" value="ECO:0007669"/>
    <property type="project" value="UniProtKB-SubCell"/>
</dbReference>
<dbReference type="GO" id="GO:0003995">
    <property type="term" value="F:acyl-CoA dehydrogenase activity"/>
    <property type="evidence" value="ECO:0007669"/>
    <property type="project" value="InterPro"/>
</dbReference>
<dbReference type="GO" id="GO:0050660">
    <property type="term" value="F:flavin adenine dinucleotide binding"/>
    <property type="evidence" value="ECO:0007669"/>
    <property type="project" value="InterPro"/>
</dbReference>
<dbReference type="GO" id="GO:0009437">
    <property type="term" value="P:carnitine metabolic process"/>
    <property type="evidence" value="ECO:0007669"/>
    <property type="project" value="UniProtKB-UniRule"/>
</dbReference>
<dbReference type="CDD" id="cd00567">
    <property type="entry name" value="ACAD"/>
    <property type="match status" value="1"/>
</dbReference>
<dbReference type="FunFam" id="1.20.140.10:FF:000001">
    <property type="entry name" value="Acyl-CoA dehydrogenase"/>
    <property type="match status" value="1"/>
</dbReference>
<dbReference type="FunFam" id="2.40.110.10:FF:000002">
    <property type="entry name" value="Acyl-CoA dehydrogenase fadE12"/>
    <property type="match status" value="1"/>
</dbReference>
<dbReference type="FunFam" id="1.10.540.10:FF:000005">
    <property type="entry name" value="Crotonobetainyl-CoA reductase"/>
    <property type="match status" value="1"/>
</dbReference>
<dbReference type="Gene3D" id="1.10.540.10">
    <property type="entry name" value="Acyl-CoA dehydrogenase/oxidase, N-terminal domain"/>
    <property type="match status" value="1"/>
</dbReference>
<dbReference type="Gene3D" id="2.40.110.10">
    <property type="entry name" value="Butyryl-CoA Dehydrogenase, subunit A, domain 2"/>
    <property type="match status" value="1"/>
</dbReference>
<dbReference type="Gene3D" id="1.20.140.10">
    <property type="entry name" value="Butyryl-CoA Dehydrogenase, subunit A, domain 3"/>
    <property type="match status" value="1"/>
</dbReference>
<dbReference type="HAMAP" id="MF_01052">
    <property type="entry name" value="CaiA"/>
    <property type="match status" value="1"/>
</dbReference>
<dbReference type="InterPro" id="IPR006089">
    <property type="entry name" value="Acyl-CoA_DH_CS"/>
</dbReference>
<dbReference type="InterPro" id="IPR006091">
    <property type="entry name" value="Acyl-CoA_Oxase/DH_mid-dom"/>
</dbReference>
<dbReference type="InterPro" id="IPR046373">
    <property type="entry name" value="Acyl-CoA_Oxase/DH_mid-dom_sf"/>
</dbReference>
<dbReference type="InterPro" id="IPR036250">
    <property type="entry name" value="AcylCo_DH-like_C"/>
</dbReference>
<dbReference type="InterPro" id="IPR009075">
    <property type="entry name" value="AcylCo_DH/oxidase_C"/>
</dbReference>
<dbReference type="InterPro" id="IPR013786">
    <property type="entry name" value="AcylCoA_DH/ox_N"/>
</dbReference>
<dbReference type="InterPro" id="IPR037069">
    <property type="entry name" value="AcylCoA_DH/ox_N_sf"/>
</dbReference>
<dbReference type="InterPro" id="IPR009100">
    <property type="entry name" value="AcylCoA_DH/oxidase_NM_dom_sf"/>
</dbReference>
<dbReference type="InterPro" id="IPR023450">
    <property type="entry name" value="CaiA"/>
</dbReference>
<dbReference type="NCBIfam" id="NF002885">
    <property type="entry name" value="PRK03354.1"/>
    <property type="match status" value="1"/>
</dbReference>
<dbReference type="PANTHER" id="PTHR43884">
    <property type="entry name" value="ACYL-COA DEHYDROGENASE"/>
    <property type="match status" value="1"/>
</dbReference>
<dbReference type="PANTHER" id="PTHR43884:SF12">
    <property type="entry name" value="ISOVALERYL-COA DEHYDROGENASE, MITOCHONDRIAL-RELATED"/>
    <property type="match status" value="1"/>
</dbReference>
<dbReference type="Pfam" id="PF00441">
    <property type="entry name" value="Acyl-CoA_dh_1"/>
    <property type="match status" value="1"/>
</dbReference>
<dbReference type="Pfam" id="PF02770">
    <property type="entry name" value="Acyl-CoA_dh_M"/>
    <property type="match status" value="1"/>
</dbReference>
<dbReference type="Pfam" id="PF02771">
    <property type="entry name" value="Acyl-CoA_dh_N"/>
    <property type="match status" value="1"/>
</dbReference>
<dbReference type="PIRSF" id="PIRSF016578">
    <property type="entry name" value="HsaA"/>
    <property type="match status" value="1"/>
</dbReference>
<dbReference type="SUPFAM" id="SSF47203">
    <property type="entry name" value="Acyl-CoA dehydrogenase C-terminal domain-like"/>
    <property type="match status" value="1"/>
</dbReference>
<dbReference type="SUPFAM" id="SSF56645">
    <property type="entry name" value="Acyl-CoA dehydrogenase NM domain-like"/>
    <property type="match status" value="1"/>
</dbReference>
<dbReference type="PROSITE" id="PS00072">
    <property type="entry name" value="ACYL_COA_DH_1"/>
    <property type="match status" value="1"/>
</dbReference>
<dbReference type="PROSITE" id="PS00073">
    <property type="entry name" value="ACYL_COA_DH_2"/>
    <property type="match status" value="1"/>
</dbReference>
<proteinExistence type="inferred from homology"/>
<organism>
    <name type="scientific">Shigella sonnei (strain Ss046)</name>
    <dbReference type="NCBI Taxonomy" id="300269"/>
    <lineage>
        <taxon>Bacteria</taxon>
        <taxon>Pseudomonadati</taxon>
        <taxon>Pseudomonadota</taxon>
        <taxon>Gammaproteobacteria</taxon>
        <taxon>Enterobacterales</taxon>
        <taxon>Enterobacteriaceae</taxon>
        <taxon>Shigella</taxon>
    </lineage>
</organism>
<name>CAIA_SHISS</name>
<comment type="function">
    <text evidence="1">Catalyzes the reduction of crotonobetainyl-CoA to gamma-butyrobetainyl-CoA.</text>
</comment>
<comment type="catalytic activity">
    <reaction evidence="1">
        <text>4-(trimethylamino)butanoyl-CoA + oxidized [electron-transfer flavoprotein] + H(+) = crotonobetainyl-CoA + reduced [electron-transfer flavoprotein]</text>
        <dbReference type="Rhea" id="RHEA:51584"/>
        <dbReference type="Rhea" id="RHEA-COMP:10685"/>
        <dbReference type="Rhea" id="RHEA-COMP:10686"/>
        <dbReference type="ChEBI" id="CHEBI:15378"/>
        <dbReference type="ChEBI" id="CHEBI:57692"/>
        <dbReference type="ChEBI" id="CHEBI:58307"/>
        <dbReference type="ChEBI" id="CHEBI:60933"/>
        <dbReference type="ChEBI" id="CHEBI:61513"/>
        <dbReference type="EC" id="1.3.8.13"/>
    </reaction>
</comment>
<comment type="cofactor">
    <cofactor evidence="1">
        <name>FAD</name>
        <dbReference type="ChEBI" id="CHEBI:57692"/>
    </cofactor>
</comment>
<comment type="pathway">
    <text evidence="1">Amine and polyamine metabolism; carnitine metabolism.</text>
</comment>
<comment type="subunit">
    <text evidence="1">Homotetramer.</text>
</comment>
<comment type="subcellular location">
    <subcellularLocation>
        <location evidence="1">Cytoplasm</location>
    </subcellularLocation>
</comment>
<comment type="similarity">
    <text evidence="1">Belongs to the acyl-CoA dehydrogenase family.</text>
</comment>
<gene>
    <name evidence="1" type="primary">caiA</name>
    <name type="ordered locus">SSON_0047</name>
</gene>
<feature type="chain" id="PRO_1000064354" description="Crotonobetainyl-CoA reductase">
    <location>
        <begin position="1"/>
        <end position="380"/>
    </location>
</feature>
<reference key="1">
    <citation type="journal article" date="2005" name="Nucleic Acids Res.">
        <title>Genome dynamics and diversity of Shigella species, the etiologic agents of bacillary dysentery.</title>
        <authorList>
            <person name="Yang F."/>
            <person name="Yang J."/>
            <person name="Zhang X."/>
            <person name="Chen L."/>
            <person name="Jiang Y."/>
            <person name="Yan Y."/>
            <person name="Tang X."/>
            <person name="Wang J."/>
            <person name="Xiong Z."/>
            <person name="Dong J."/>
            <person name="Xue Y."/>
            <person name="Zhu Y."/>
            <person name="Xu X."/>
            <person name="Sun L."/>
            <person name="Chen S."/>
            <person name="Nie H."/>
            <person name="Peng J."/>
            <person name="Xu J."/>
            <person name="Wang Y."/>
            <person name="Yuan Z."/>
            <person name="Wen Y."/>
            <person name="Yao Z."/>
            <person name="Shen Y."/>
            <person name="Qiang B."/>
            <person name="Hou Y."/>
            <person name="Yu J."/>
            <person name="Jin Q."/>
        </authorList>
    </citation>
    <scope>NUCLEOTIDE SEQUENCE [LARGE SCALE GENOMIC DNA]</scope>
    <source>
        <strain>Ss046</strain>
    </source>
</reference>
<keyword id="KW-0963">Cytoplasm</keyword>
<keyword id="KW-0274">FAD</keyword>
<keyword id="KW-0285">Flavoprotein</keyword>
<keyword id="KW-0560">Oxidoreductase</keyword>
<keyword id="KW-1185">Reference proteome</keyword>
<accession>Q3Z5W9</accession>